<protein>
    <recommendedName>
        <fullName>Aspartate carbamoyltransferase regulatory chain</fullName>
    </recommendedName>
</protein>
<reference key="1">
    <citation type="journal article" date="2001" name="Nature">
        <title>Genome sequence of enterohaemorrhagic Escherichia coli O157:H7.</title>
        <authorList>
            <person name="Perna N.T."/>
            <person name="Plunkett G. III"/>
            <person name="Burland V."/>
            <person name="Mau B."/>
            <person name="Glasner J.D."/>
            <person name="Rose D.J."/>
            <person name="Mayhew G.F."/>
            <person name="Evans P.S."/>
            <person name="Gregor J."/>
            <person name="Kirkpatrick H.A."/>
            <person name="Posfai G."/>
            <person name="Hackett J."/>
            <person name="Klink S."/>
            <person name="Boutin A."/>
            <person name="Shao Y."/>
            <person name="Miller L."/>
            <person name="Grotbeck E.J."/>
            <person name="Davis N.W."/>
            <person name="Lim A."/>
            <person name="Dimalanta E.T."/>
            <person name="Potamousis K."/>
            <person name="Apodaca J."/>
            <person name="Anantharaman T.S."/>
            <person name="Lin J."/>
            <person name="Yen G."/>
            <person name="Schwartz D.C."/>
            <person name="Welch R.A."/>
            <person name="Blattner F.R."/>
        </authorList>
    </citation>
    <scope>NUCLEOTIDE SEQUENCE [LARGE SCALE GENOMIC DNA]</scope>
    <source>
        <strain>O157:H7 / EDL933 / ATCC 700927 / EHEC</strain>
    </source>
</reference>
<reference key="2">
    <citation type="journal article" date="2001" name="DNA Res.">
        <title>Complete genome sequence of enterohemorrhagic Escherichia coli O157:H7 and genomic comparison with a laboratory strain K-12.</title>
        <authorList>
            <person name="Hayashi T."/>
            <person name="Makino K."/>
            <person name="Ohnishi M."/>
            <person name="Kurokawa K."/>
            <person name="Ishii K."/>
            <person name="Yokoyama K."/>
            <person name="Han C.-G."/>
            <person name="Ohtsubo E."/>
            <person name="Nakayama K."/>
            <person name="Murata T."/>
            <person name="Tanaka M."/>
            <person name="Tobe T."/>
            <person name="Iida T."/>
            <person name="Takami H."/>
            <person name="Honda T."/>
            <person name="Sasakawa C."/>
            <person name="Ogasawara N."/>
            <person name="Yasunaga T."/>
            <person name="Kuhara S."/>
            <person name="Shiba T."/>
            <person name="Hattori M."/>
            <person name="Shinagawa H."/>
        </authorList>
    </citation>
    <scope>NUCLEOTIDE SEQUENCE [LARGE SCALE GENOMIC DNA]</scope>
    <source>
        <strain>O157:H7 / Sakai / RIMD 0509952 / EHEC</strain>
    </source>
</reference>
<keyword id="KW-0479">Metal-binding</keyword>
<keyword id="KW-0665">Pyrimidine biosynthesis</keyword>
<keyword id="KW-1185">Reference proteome</keyword>
<keyword id="KW-0862">Zinc</keyword>
<feature type="initiator methionine" description="Removed" evidence="1">
    <location>
        <position position="1"/>
    </location>
</feature>
<feature type="chain" id="PRO_0000142304" description="Aspartate carbamoyltransferase regulatory chain">
    <location>
        <begin position="2"/>
        <end position="153"/>
    </location>
</feature>
<feature type="binding site" evidence="1">
    <location>
        <position position="109"/>
    </location>
    <ligand>
        <name>Zn(2+)</name>
        <dbReference type="ChEBI" id="CHEBI:29105"/>
    </ligand>
</feature>
<feature type="binding site" evidence="1">
    <location>
        <position position="114"/>
    </location>
    <ligand>
        <name>Zn(2+)</name>
        <dbReference type="ChEBI" id="CHEBI:29105"/>
    </ligand>
</feature>
<feature type="binding site" evidence="1">
    <location>
        <position position="138"/>
    </location>
    <ligand>
        <name>Zn(2+)</name>
        <dbReference type="ChEBI" id="CHEBI:29105"/>
    </ligand>
</feature>
<feature type="binding site" evidence="1">
    <location>
        <position position="141"/>
    </location>
    <ligand>
        <name>Zn(2+)</name>
        <dbReference type="ChEBI" id="CHEBI:29105"/>
    </ligand>
</feature>
<gene>
    <name type="primary">pyrI</name>
    <name type="ordered locus">Z5855</name>
    <name type="ordered locus">ECs5221</name>
</gene>
<proteinExistence type="inferred from homology"/>
<sequence length="153" mass="17121">MTHDNKLQVEAIKRGTVIDHIPAQIGFKLLSLFKLTETDQRITIGLNLPSGEMGRKDLIKIENTFLSEDQVDQLALYAPQATVNRIDNYEVVGKSRPSLPERIDNVLVCPNSNCISHAEPVSSSFAVRKRANDIALKCKYCEKEFSHNVVLAN</sequence>
<accession>P0A7F5</accession>
<accession>P00478</accession>
<name>PYRI_ECO57</name>
<organism>
    <name type="scientific">Escherichia coli O157:H7</name>
    <dbReference type="NCBI Taxonomy" id="83334"/>
    <lineage>
        <taxon>Bacteria</taxon>
        <taxon>Pseudomonadati</taxon>
        <taxon>Pseudomonadota</taxon>
        <taxon>Gammaproteobacteria</taxon>
        <taxon>Enterobacterales</taxon>
        <taxon>Enterobacteriaceae</taxon>
        <taxon>Escherichia</taxon>
    </lineage>
</organism>
<dbReference type="EMBL" id="AE005174">
    <property type="protein sequence ID" value="AAG59442.1"/>
    <property type="molecule type" value="Genomic_DNA"/>
</dbReference>
<dbReference type="EMBL" id="BA000007">
    <property type="protein sequence ID" value="BAB38644.1"/>
    <property type="molecule type" value="Genomic_DNA"/>
</dbReference>
<dbReference type="RefSeq" id="NP_313248.1">
    <property type="nucleotide sequence ID" value="NC_002695.1"/>
</dbReference>
<dbReference type="RefSeq" id="WP_000148581.1">
    <property type="nucleotide sequence ID" value="NZ_VOAI01000023.1"/>
</dbReference>
<dbReference type="SMR" id="P0A7F5"/>
<dbReference type="STRING" id="155864.Z5855"/>
<dbReference type="GeneID" id="913844"/>
<dbReference type="GeneID" id="93777580"/>
<dbReference type="KEGG" id="ece:Z5855"/>
<dbReference type="KEGG" id="ecs:ECs_5221"/>
<dbReference type="PATRIC" id="fig|386585.9.peg.5460"/>
<dbReference type="eggNOG" id="COG1781">
    <property type="taxonomic scope" value="Bacteria"/>
</dbReference>
<dbReference type="HOGENOM" id="CLU_128576_0_0_6"/>
<dbReference type="OMA" id="CPNRNCI"/>
<dbReference type="Proteomes" id="UP000000558">
    <property type="component" value="Chromosome"/>
</dbReference>
<dbReference type="Proteomes" id="UP000002519">
    <property type="component" value="Chromosome"/>
</dbReference>
<dbReference type="GO" id="GO:0009347">
    <property type="term" value="C:aspartate carbamoyltransferase complex"/>
    <property type="evidence" value="ECO:0007669"/>
    <property type="project" value="InterPro"/>
</dbReference>
<dbReference type="GO" id="GO:0046872">
    <property type="term" value="F:metal ion binding"/>
    <property type="evidence" value="ECO:0007669"/>
    <property type="project" value="UniProtKB-KW"/>
</dbReference>
<dbReference type="GO" id="GO:0006207">
    <property type="term" value="P:'de novo' pyrimidine nucleobase biosynthetic process"/>
    <property type="evidence" value="ECO:0007669"/>
    <property type="project" value="InterPro"/>
</dbReference>
<dbReference type="GO" id="GO:0006221">
    <property type="term" value="P:pyrimidine nucleotide biosynthetic process"/>
    <property type="evidence" value="ECO:0007669"/>
    <property type="project" value="UniProtKB-UniRule"/>
</dbReference>
<dbReference type="FunFam" id="2.30.30.20:FF:000001">
    <property type="entry name" value="Aspartate carbamoyltransferase regulatory chain"/>
    <property type="match status" value="1"/>
</dbReference>
<dbReference type="FunFam" id="3.30.70.140:FF:000001">
    <property type="entry name" value="Aspartate carbamoyltransferase regulatory chain"/>
    <property type="match status" value="1"/>
</dbReference>
<dbReference type="Gene3D" id="2.30.30.20">
    <property type="entry name" value="Aspartate carbamoyltransferase regulatory subunit, C-terminal domain"/>
    <property type="match status" value="1"/>
</dbReference>
<dbReference type="Gene3D" id="3.30.70.140">
    <property type="entry name" value="Aspartate carbamoyltransferase regulatory subunit, N-terminal domain"/>
    <property type="match status" value="1"/>
</dbReference>
<dbReference type="HAMAP" id="MF_00002">
    <property type="entry name" value="Asp_carb_tr_reg"/>
    <property type="match status" value="1"/>
</dbReference>
<dbReference type="InterPro" id="IPR020545">
    <property type="entry name" value="Asp_carbamoyltransf_reg_N"/>
</dbReference>
<dbReference type="InterPro" id="IPR002801">
    <property type="entry name" value="Asp_carbamoylTrfase_reg"/>
</dbReference>
<dbReference type="InterPro" id="IPR020542">
    <property type="entry name" value="Asp_carbamoyltrfase_reg_C"/>
</dbReference>
<dbReference type="InterPro" id="IPR036792">
    <property type="entry name" value="Asp_carbatrfase_reg_C_sf"/>
</dbReference>
<dbReference type="InterPro" id="IPR036793">
    <property type="entry name" value="Asp_carbatrfase_reg_N_sf"/>
</dbReference>
<dbReference type="NCBIfam" id="TIGR00240">
    <property type="entry name" value="ATCase_reg"/>
    <property type="match status" value="1"/>
</dbReference>
<dbReference type="PANTHER" id="PTHR35805">
    <property type="entry name" value="ASPARTATE CARBAMOYLTRANSFERASE REGULATORY CHAIN"/>
    <property type="match status" value="1"/>
</dbReference>
<dbReference type="PANTHER" id="PTHR35805:SF1">
    <property type="entry name" value="ASPARTATE CARBAMOYLTRANSFERASE REGULATORY CHAIN"/>
    <property type="match status" value="1"/>
</dbReference>
<dbReference type="Pfam" id="PF01948">
    <property type="entry name" value="PyrI"/>
    <property type="match status" value="1"/>
</dbReference>
<dbReference type="Pfam" id="PF02748">
    <property type="entry name" value="PyrI_C"/>
    <property type="match status" value="1"/>
</dbReference>
<dbReference type="SUPFAM" id="SSF57825">
    <property type="entry name" value="Aspartate carbamoyltransferase, Regulatory-chain, C-terminal domain"/>
    <property type="match status" value="1"/>
</dbReference>
<dbReference type="SUPFAM" id="SSF54893">
    <property type="entry name" value="Aspartate carbamoyltransferase, Regulatory-chain, N-terminal domain"/>
    <property type="match status" value="1"/>
</dbReference>
<comment type="function">
    <text evidence="1">Involved in allosteric regulation of aspartate carbamoyltransferase.</text>
</comment>
<comment type="cofactor">
    <cofactor evidence="1">
        <name>Zn(2+)</name>
        <dbReference type="ChEBI" id="CHEBI:29105"/>
    </cofactor>
    <text evidence="1">Binds 1 zinc ion per subunit.</text>
</comment>
<comment type="subunit">
    <text evidence="1">Heterododecamer (2C3:3R2) of six catalytic PyrB chains organized as two trimers (C3), and six regulatory PyrI chains organized as three dimers (R2).</text>
</comment>
<comment type="similarity">
    <text evidence="2">Belongs to the PyrI family.</text>
</comment>
<evidence type="ECO:0000250" key="1"/>
<evidence type="ECO:0000305" key="2"/>